<accession>Q4JXN8</accession>
<feature type="chain" id="PRO_0000256898" description="Chaperonin GroEL 1">
    <location>
        <begin position="1"/>
        <end position="547"/>
    </location>
</feature>
<feature type="binding site" evidence="1">
    <location>
        <begin position="29"/>
        <end position="32"/>
    </location>
    <ligand>
        <name>ATP</name>
        <dbReference type="ChEBI" id="CHEBI:30616"/>
    </ligand>
</feature>
<feature type="binding site" evidence="1">
    <location>
        <begin position="86"/>
        <end position="90"/>
    </location>
    <ligand>
        <name>ATP</name>
        <dbReference type="ChEBI" id="CHEBI:30616"/>
    </ligand>
</feature>
<feature type="binding site" evidence="1">
    <location>
        <position position="418"/>
    </location>
    <ligand>
        <name>ATP</name>
        <dbReference type="ChEBI" id="CHEBI:30616"/>
    </ligand>
</feature>
<feature type="binding site" evidence="1">
    <location>
        <begin position="482"/>
        <end position="484"/>
    </location>
    <ligand>
        <name>ATP</name>
        <dbReference type="ChEBI" id="CHEBI:30616"/>
    </ligand>
</feature>
<feature type="binding site" evidence="1">
    <location>
        <position position="498"/>
    </location>
    <ligand>
        <name>ATP</name>
        <dbReference type="ChEBI" id="CHEBI:30616"/>
    </ligand>
</feature>
<proteinExistence type="inferred from homology"/>
<name>CH601_CORJK</name>
<organism>
    <name type="scientific">Corynebacterium jeikeium (strain K411)</name>
    <dbReference type="NCBI Taxonomy" id="306537"/>
    <lineage>
        <taxon>Bacteria</taxon>
        <taxon>Bacillati</taxon>
        <taxon>Actinomycetota</taxon>
        <taxon>Actinomycetes</taxon>
        <taxon>Mycobacteriales</taxon>
        <taxon>Corynebacteriaceae</taxon>
        <taxon>Corynebacterium</taxon>
    </lineage>
</organism>
<reference key="1">
    <citation type="journal article" date="2005" name="J. Bacteriol.">
        <title>Complete genome sequence and analysis of the multiresistant nosocomial pathogen Corynebacterium jeikeium K411, a lipid-requiring bacterium of the human skin flora.</title>
        <authorList>
            <person name="Tauch A."/>
            <person name="Kaiser O."/>
            <person name="Hain T."/>
            <person name="Goesmann A."/>
            <person name="Weisshaar B."/>
            <person name="Albersmeier A."/>
            <person name="Bekel T."/>
            <person name="Bischoff N."/>
            <person name="Brune I."/>
            <person name="Chakraborty T."/>
            <person name="Kalinowski J."/>
            <person name="Meyer F."/>
            <person name="Rupp O."/>
            <person name="Schneiker S."/>
            <person name="Viehoever P."/>
            <person name="Puehler A."/>
        </authorList>
    </citation>
    <scope>NUCLEOTIDE SEQUENCE [LARGE SCALE GENOMIC DNA]</scope>
    <source>
        <strain>K411</strain>
    </source>
</reference>
<dbReference type="EC" id="5.6.1.7" evidence="1"/>
<dbReference type="EMBL" id="CR931997">
    <property type="protein sequence ID" value="CAI36419.1"/>
    <property type="molecule type" value="Genomic_DNA"/>
</dbReference>
<dbReference type="RefSeq" id="WP_011272983.1">
    <property type="nucleotide sequence ID" value="NC_007164.1"/>
</dbReference>
<dbReference type="SMR" id="Q4JXN8"/>
<dbReference type="STRING" id="306537.jk0267"/>
<dbReference type="KEGG" id="cjk:jk0267"/>
<dbReference type="PATRIC" id="fig|306537.10.peg.277"/>
<dbReference type="eggNOG" id="COG0459">
    <property type="taxonomic scope" value="Bacteria"/>
</dbReference>
<dbReference type="HOGENOM" id="CLU_016503_3_0_11"/>
<dbReference type="OrthoDB" id="9766614at2"/>
<dbReference type="Proteomes" id="UP000000545">
    <property type="component" value="Chromosome"/>
</dbReference>
<dbReference type="GO" id="GO:0005737">
    <property type="term" value="C:cytoplasm"/>
    <property type="evidence" value="ECO:0007669"/>
    <property type="project" value="UniProtKB-SubCell"/>
</dbReference>
<dbReference type="GO" id="GO:0005524">
    <property type="term" value="F:ATP binding"/>
    <property type="evidence" value="ECO:0007669"/>
    <property type="project" value="UniProtKB-UniRule"/>
</dbReference>
<dbReference type="GO" id="GO:0140662">
    <property type="term" value="F:ATP-dependent protein folding chaperone"/>
    <property type="evidence" value="ECO:0007669"/>
    <property type="project" value="InterPro"/>
</dbReference>
<dbReference type="GO" id="GO:0016853">
    <property type="term" value="F:isomerase activity"/>
    <property type="evidence" value="ECO:0007669"/>
    <property type="project" value="UniProtKB-KW"/>
</dbReference>
<dbReference type="GO" id="GO:0051082">
    <property type="term" value="F:unfolded protein binding"/>
    <property type="evidence" value="ECO:0007669"/>
    <property type="project" value="UniProtKB-UniRule"/>
</dbReference>
<dbReference type="GO" id="GO:0042026">
    <property type="term" value="P:protein refolding"/>
    <property type="evidence" value="ECO:0007669"/>
    <property type="project" value="UniProtKB-UniRule"/>
</dbReference>
<dbReference type="CDD" id="cd03344">
    <property type="entry name" value="GroEL"/>
    <property type="match status" value="1"/>
</dbReference>
<dbReference type="FunFam" id="3.50.7.10:FF:000001">
    <property type="entry name" value="60 kDa chaperonin"/>
    <property type="match status" value="1"/>
</dbReference>
<dbReference type="Gene3D" id="3.50.7.10">
    <property type="entry name" value="GroEL"/>
    <property type="match status" value="1"/>
</dbReference>
<dbReference type="Gene3D" id="1.10.560.10">
    <property type="entry name" value="GroEL-like equatorial domain"/>
    <property type="match status" value="1"/>
</dbReference>
<dbReference type="Gene3D" id="3.30.260.10">
    <property type="entry name" value="TCP-1-like chaperonin intermediate domain"/>
    <property type="match status" value="1"/>
</dbReference>
<dbReference type="HAMAP" id="MF_00600">
    <property type="entry name" value="CH60"/>
    <property type="match status" value="1"/>
</dbReference>
<dbReference type="InterPro" id="IPR018370">
    <property type="entry name" value="Chaperonin_Cpn60_CS"/>
</dbReference>
<dbReference type="InterPro" id="IPR001844">
    <property type="entry name" value="Cpn60/GroEL"/>
</dbReference>
<dbReference type="InterPro" id="IPR002423">
    <property type="entry name" value="Cpn60/GroEL/TCP-1"/>
</dbReference>
<dbReference type="InterPro" id="IPR027409">
    <property type="entry name" value="GroEL-like_apical_dom_sf"/>
</dbReference>
<dbReference type="InterPro" id="IPR027413">
    <property type="entry name" value="GROEL-like_equatorial_sf"/>
</dbReference>
<dbReference type="InterPro" id="IPR027410">
    <property type="entry name" value="TCP-1-like_intermed_sf"/>
</dbReference>
<dbReference type="NCBIfam" id="TIGR02348">
    <property type="entry name" value="GroEL"/>
    <property type="match status" value="1"/>
</dbReference>
<dbReference type="NCBIfam" id="NF000592">
    <property type="entry name" value="PRK00013.1"/>
    <property type="match status" value="1"/>
</dbReference>
<dbReference type="NCBIfam" id="NF009487">
    <property type="entry name" value="PRK12849.1"/>
    <property type="match status" value="1"/>
</dbReference>
<dbReference type="NCBIfam" id="NF009488">
    <property type="entry name" value="PRK12850.1"/>
    <property type="match status" value="1"/>
</dbReference>
<dbReference type="NCBIfam" id="NF009489">
    <property type="entry name" value="PRK12851.1"/>
    <property type="match status" value="1"/>
</dbReference>
<dbReference type="PANTHER" id="PTHR45633">
    <property type="entry name" value="60 KDA HEAT SHOCK PROTEIN, MITOCHONDRIAL"/>
    <property type="match status" value="1"/>
</dbReference>
<dbReference type="Pfam" id="PF00118">
    <property type="entry name" value="Cpn60_TCP1"/>
    <property type="match status" value="1"/>
</dbReference>
<dbReference type="PRINTS" id="PR00298">
    <property type="entry name" value="CHAPERONIN60"/>
</dbReference>
<dbReference type="SUPFAM" id="SSF52029">
    <property type="entry name" value="GroEL apical domain-like"/>
    <property type="match status" value="1"/>
</dbReference>
<dbReference type="SUPFAM" id="SSF48592">
    <property type="entry name" value="GroEL equatorial domain-like"/>
    <property type="match status" value="1"/>
</dbReference>
<dbReference type="SUPFAM" id="SSF54849">
    <property type="entry name" value="GroEL-intermediate domain like"/>
    <property type="match status" value="1"/>
</dbReference>
<dbReference type="PROSITE" id="PS00296">
    <property type="entry name" value="CHAPERONINS_CPN60"/>
    <property type="match status" value="1"/>
</dbReference>
<comment type="function">
    <text evidence="1">Together with its co-chaperonin GroES, plays an essential role in assisting protein folding. The GroEL-GroES system forms a nano-cage that allows encapsulation of the non-native substrate proteins and provides a physical environment optimized to promote and accelerate protein folding.</text>
</comment>
<comment type="catalytic activity">
    <reaction evidence="1">
        <text>ATP + H2O + a folded polypeptide = ADP + phosphate + an unfolded polypeptide.</text>
        <dbReference type="EC" id="5.6.1.7"/>
    </reaction>
</comment>
<comment type="subunit">
    <text evidence="1">Forms a cylinder of 14 subunits composed of two heptameric rings stacked back-to-back. Interacts with the co-chaperonin GroES.</text>
</comment>
<comment type="subcellular location">
    <subcellularLocation>
        <location evidence="1">Cytoplasm</location>
    </subcellularLocation>
</comment>
<comment type="similarity">
    <text evidence="1">Belongs to the chaperonin (HSP60) family.</text>
</comment>
<evidence type="ECO:0000255" key="1">
    <source>
        <dbReference type="HAMAP-Rule" id="MF_00600"/>
    </source>
</evidence>
<gene>
    <name evidence="1" type="primary">groEL1</name>
    <name evidence="1" type="synonym">groL1</name>
    <name type="ordered locus">jk0267</name>
</gene>
<sequence>MAKMIAFDEEARRGLEKGLNTLADAVKVTLGPKGRNVVLERKWGAPTITNDGVTIAREIELEDPYEKIGAELVKEVAKKTDDVAGDGTTTATVLAQSLVREGLRNVAAGSNPMGIKRGIQAGVEKITAELLSHAKEIETQEQIAATAGISAADEKIGELIAEAMYKVGDGKLNKDGVITVEESNAFGVNLEVTEGMRFDKGYISGYFATDVERGEAVLEDPYILLVSSKISNVKDLLPLLEKVMQSGKPLLIVAEDIEGEALSTLVVNKIRGTFKSVAVKAPGFGDRRKAQLQDIAILTGGQVIAEEVGLSLETADLPMLGTARKVVVTKDDTTIVDGAGSAEQLAGRIKQIRQEIENADSDYDAEKLQERLAKLSGGVAVLQVGAATEVELKERKHRIEDAVRNAKAAAEEGIVAGGGAALLQTASVLDDNLGLEGDEATGVQIVRAALAAPLKQIAHNAGLEPGVVVDKVANLPVGEGLNAATGEYVDLLGAGISDPVKVTRSALQNAASIAALFLTTEAVVADKPEPEAPAMPGADEMGGMGGF</sequence>
<keyword id="KW-0067">ATP-binding</keyword>
<keyword id="KW-0143">Chaperone</keyword>
<keyword id="KW-0963">Cytoplasm</keyword>
<keyword id="KW-0413">Isomerase</keyword>
<keyword id="KW-0547">Nucleotide-binding</keyword>
<keyword id="KW-1185">Reference proteome</keyword>
<protein>
    <recommendedName>
        <fullName evidence="1">Chaperonin GroEL 1</fullName>
        <ecNumber evidence="1">5.6.1.7</ecNumber>
    </recommendedName>
    <alternativeName>
        <fullName evidence="1">60 kDa chaperonin 1</fullName>
    </alternativeName>
    <alternativeName>
        <fullName evidence="1">Chaperonin-60 1</fullName>
        <shortName evidence="1">Cpn60 1</shortName>
    </alternativeName>
</protein>